<dbReference type="EMBL" id="AB013342">
    <property type="protein sequence ID" value="BAA25915.1"/>
    <property type="molecule type" value="mRNA"/>
</dbReference>
<dbReference type="SMR" id="O73672"/>
<dbReference type="MEROPS" id="T01.972"/>
<dbReference type="OrthoDB" id="431557at2759"/>
<dbReference type="Proteomes" id="UP000515129">
    <property type="component" value="Unplaced"/>
</dbReference>
<dbReference type="GO" id="GO:0005737">
    <property type="term" value="C:cytoplasm"/>
    <property type="evidence" value="ECO:0007669"/>
    <property type="project" value="UniProtKB-SubCell"/>
</dbReference>
<dbReference type="GO" id="GO:0005634">
    <property type="term" value="C:nucleus"/>
    <property type="evidence" value="ECO:0007669"/>
    <property type="project" value="UniProtKB-SubCell"/>
</dbReference>
<dbReference type="GO" id="GO:0005839">
    <property type="term" value="C:proteasome core complex"/>
    <property type="evidence" value="ECO:0000250"/>
    <property type="project" value="UniProtKB"/>
</dbReference>
<dbReference type="GO" id="GO:0019773">
    <property type="term" value="C:proteasome core complex, alpha-subunit complex"/>
    <property type="evidence" value="ECO:0000250"/>
    <property type="project" value="UniProtKB"/>
</dbReference>
<dbReference type="GO" id="GO:0006511">
    <property type="term" value="P:ubiquitin-dependent protein catabolic process"/>
    <property type="evidence" value="ECO:0007669"/>
    <property type="project" value="InterPro"/>
</dbReference>
<dbReference type="CDD" id="cd03750">
    <property type="entry name" value="proteasome_alpha_type_2"/>
    <property type="match status" value="1"/>
</dbReference>
<dbReference type="FunFam" id="3.60.20.10:FF:000012">
    <property type="entry name" value="Proteasome subunit alpha type"/>
    <property type="match status" value="1"/>
</dbReference>
<dbReference type="Gene3D" id="3.60.20.10">
    <property type="entry name" value="Glutamine Phosphoribosylpyrophosphate, subunit 1, domain 1"/>
    <property type="match status" value="1"/>
</dbReference>
<dbReference type="InterPro" id="IPR029055">
    <property type="entry name" value="Ntn_hydrolases_N"/>
</dbReference>
<dbReference type="InterPro" id="IPR050115">
    <property type="entry name" value="Proteasome_alpha"/>
</dbReference>
<dbReference type="InterPro" id="IPR023332">
    <property type="entry name" value="Proteasome_alpha-type"/>
</dbReference>
<dbReference type="InterPro" id="IPR000426">
    <property type="entry name" value="Proteasome_asu_N"/>
</dbReference>
<dbReference type="InterPro" id="IPR001353">
    <property type="entry name" value="Proteasome_sua/b"/>
</dbReference>
<dbReference type="NCBIfam" id="NF003075">
    <property type="entry name" value="PRK03996.1"/>
    <property type="match status" value="1"/>
</dbReference>
<dbReference type="PANTHER" id="PTHR11599">
    <property type="entry name" value="PROTEASOME SUBUNIT ALPHA/BETA"/>
    <property type="match status" value="1"/>
</dbReference>
<dbReference type="Pfam" id="PF00227">
    <property type="entry name" value="Proteasome"/>
    <property type="match status" value="1"/>
</dbReference>
<dbReference type="Pfam" id="PF10584">
    <property type="entry name" value="Proteasome_A_N"/>
    <property type="match status" value="1"/>
</dbReference>
<dbReference type="SMART" id="SM00948">
    <property type="entry name" value="Proteasome_A_N"/>
    <property type="match status" value="1"/>
</dbReference>
<dbReference type="SUPFAM" id="SSF56235">
    <property type="entry name" value="N-terminal nucleophile aminohydrolases (Ntn hydrolases)"/>
    <property type="match status" value="1"/>
</dbReference>
<dbReference type="PROSITE" id="PS00388">
    <property type="entry name" value="PROTEASOME_ALPHA_1"/>
    <property type="match status" value="1"/>
</dbReference>
<dbReference type="PROSITE" id="PS51475">
    <property type="entry name" value="PROTEASOME_ALPHA_2"/>
    <property type="match status" value="1"/>
</dbReference>
<name>PSA2_CARAU</name>
<organism>
    <name type="scientific">Carassius auratus</name>
    <name type="common">Goldfish</name>
    <dbReference type="NCBI Taxonomy" id="7957"/>
    <lineage>
        <taxon>Eukaryota</taxon>
        <taxon>Metazoa</taxon>
        <taxon>Chordata</taxon>
        <taxon>Craniata</taxon>
        <taxon>Vertebrata</taxon>
        <taxon>Euteleostomi</taxon>
        <taxon>Actinopterygii</taxon>
        <taxon>Neopterygii</taxon>
        <taxon>Teleostei</taxon>
        <taxon>Ostariophysi</taxon>
        <taxon>Cypriniformes</taxon>
        <taxon>Cyprinidae</taxon>
        <taxon>Cyprininae</taxon>
        <taxon>Carassius</taxon>
    </lineage>
</organism>
<feature type="initiator methionine" description="Removed" evidence="1">
    <location>
        <position position="1"/>
    </location>
</feature>
<feature type="chain" id="PRO_0000124081" description="Proteasome subunit alpha type-2">
    <location>
        <begin position="2"/>
        <end position="234"/>
    </location>
</feature>
<feature type="modified residue" description="N-acetylalanine" evidence="1">
    <location>
        <position position="2"/>
    </location>
</feature>
<feature type="modified residue" description="Phosphotyrosine" evidence="1">
    <location>
        <position position="121"/>
    </location>
</feature>
<evidence type="ECO:0000250" key="1"/>
<evidence type="ECO:0000255" key="2">
    <source>
        <dbReference type="PROSITE-ProRule" id="PRU00808"/>
    </source>
</evidence>
<accession>O73672</accession>
<gene>
    <name type="primary">psma2</name>
</gene>
<keyword id="KW-0007">Acetylation</keyword>
<keyword id="KW-0963">Cytoplasm</keyword>
<keyword id="KW-0539">Nucleus</keyword>
<keyword id="KW-0597">Phosphoprotein</keyword>
<keyword id="KW-0647">Proteasome</keyword>
<keyword id="KW-1185">Reference proteome</keyword>
<comment type="function">
    <text evidence="1">The proteasome is a multicatalytic proteinase complex which is characterized by its ability to cleave peptides with Arg, Phe, Tyr, Leu, and Glu adjacent to the leaving group at neutral or slightly basic pH. The proteasome has an ATP-dependent proteolytic activity. PSMA2 may have a potential regulatory effect on another component(s) of the proteasome complex through tyrosine phosphorylation (By similarity).</text>
</comment>
<comment type="subunit">
    <text evidence="1">The 26S proteasome consists of a 20S proteasome core and two 19S regulatory subunits. The 20S proteasome core is composed of 28 subunits that are arranged in four stacked rings, resulting in a barrel-shaped structure. The two end rings are each formed by seven alpha subunits, and the two central rings are each formed by seven beta subunits. The catalytic chamber with the active sites is on the inside of the barrel (By similarity).</text>
</comment>
<comment type="subcellular location">
    <subcellularLocation>
        <location evidence="1">Cytoplasm</location>
    </subcellularLocation>
    <subcellularLocation>
        <location evidence="1">Nucleus</location>
    </subcellularLocation>
</comment>
<comment type="similarity">
    <text evidence="2">Belongs to the peptidase T1A family.</text>
</comment>
<protein>
    <recommendedName>
        <fullName>Proteasome subunit alpha type-2</fullName>
    </recommendedName>
</protein>
<proteinExistence type="evidence at transcript level"/>
<sequence length="234" mass="25878">MADRGYSFSLTTFSPSGKLVQIEYALAAVAAGAPSVGIKASNGVVLATEKKQKSILYDEQSVHKIEPITKHIGMVYSGMGPDYRVLVRRARKLAQQYFLVYQEPIPTGQLVQRVASVMQEYTQSGGVRPFGVSLLIAGWDEDRPYLFQSDPSGAYFAWKATAMGKSYVNGKTFLEKRYNEDLELEDAIHTAILTLKESFEGQMTEENIEVGICNEAGFRRLSPAEVKDYLAAIA</sequence>
<reference key="1">
    <citation type="submission" date="1998-04" db="EMBL/GenBank/DDBJ databases">
        <title>Goldfish proteasome subunit alpha 2.</title>
        <authorList>
            <person name="Horiguchi R."/>
            <person name="Tokumoto M."/>
            <person name="Tokumoto T."/>
        </authorList>
    </citation>
    <scope>NUCLEOTIDE SEQUENCE [MRNA]</scope>
    <source>
        <tissue>Ovary</tissue>
    </source>
</reference>